<organism>
    <name type="scientific">Herpetosiphon aurantiacus (strain ATCC 23779 / DSM 785 / 114-95)</name>
    <dbReference type="NCBI Taxonomy" id="316274"/>
    <lineage>
        <taxon>Bacteria</taxon>
        <taxon>Bacillati</taxon>
        <taxon>Chloroflexota</taxon>
        <taxon>Chloroflexia</taxon>
        <taxon>Herpetosiphonales</taxon>
        <taxon>Herpetosiphonaceae</taxon>
        <taxon>Herpetosiphon</taxon>
    </lineage>
</organism>
<evidence type="ECO:0000255" key="1">
    <source>
        <dbReference type="HAMAP-Rule" id="MF_01595"/>
    </source>
</evidence>
<evidence type="ECO:0000256" key="2">
    <source>
        <dbReference type="SAM" id="MobiDB-lite"/>
    </source>
</evidence>
<name>PNP_HERA2</name>
<reference key="1">
    <citation type="journal article" date="2011" name="Stand. Genomic Sci.">
        <title>Complete genome sequence of the filamentous gliding predatory bacterium Herpetosiphon aurantiacus type strain (114-95(T)).</title>
        <authorList>
            <person name="Kiss H."/>
            <person name="Nett M."/>
            <person name="Domin N."/>
            <person name="Martin K."/>
            <person name="Maresca J.A."/>
            <person name="Copeland A."/>
            <person name="Lapidus A."/>
            <person name="Lucas S."/>
            <person name="Berry K.W."/>
            <person name="Glavina Del Rio T."/>
            <person name="Dalin E."/>
            <person name="Tice H."/>
            <person name="Pitluck S."/>
            <person name="Richardson P."/>
            <person name="Bruce D."/>
            <person name="Goodwin L."/>
            <person name="Han C."/>
            <person name="Detter J.C."/>
            <person name="Schmutz J."/>
            <person name="Brettin T."/>
            <person name="Land M."/>
            <person name="Hauser L."/>
            <person name="Kyrpides N.C."/>
            <person name="Ivanova N."/>
            <person name="Goeker M."/>
            <person name="Woyke T."/>
            <person name="Klenk H.P."/>
            <person name="Bryant D.A."/>
        </authorList>
    </citation>
    <scope>NUCLEOTIDE SEQUENCE [LARGE SCALE GENOMIC DNA]</scope>
    <source>
        <strain>ATCC 23779 / DSM 785 / 114-95</strain>
    </source>
</reference>
<protein>
    <recommendedName>
        <fullName evidence="1">Polyribonucleotide nucleotidyltransferase</fullName>
        <ecNumber evidence="1">2.7.7.8</ecNumber>
    </recommendedName>
    <alternativeName>
        <fullName evidence="1">Polynucleotide phosphorylase</fullName>
        <shortName evidence="1">PNPase</shortName>
    </alternativeName>
</protein>
<proteinExistence type="inferred from homology"/>
<comment type="function">
    <text evidence="1">Involved in mRNA degradation. Catalyzes the phosphorolysis of single-stranded polyribonucleotides processively in the 3'- to 5'-direction.</text>
</comment>
<comment type="catalytic activity">
    <reaction evidence="1">
        <text>RNA(n+1) + phosphate = RNA(n) + a ribonucleoside 5'-diphosphate</text>
        <dbReference type="Rhea" id="RHEA:22096"/>
        <dbReference type="Rhea" id="RHEA-COMP:14527"/>
        <dbReference type="Rhea" id="RHEA-COMP:17342"/>
        <dbReference type="ChEBI" id="CHEBI:43474"/>
        <dbReference type="ChEBI" id="CHEBI:57930"/>
        <dbReference type="ChEBI" id="CHEBI:140395"/>
        <dbReference type="EC" id="2.7.7.8"/>
    </reaction>
</comment>
<comment type="cofactor">
    <cofactor evidence="1">
        <name>Mg(2+)</name>
        <dbReference type="ChEBI" id="CHEBI:18420"/>
    </cofactor>
</comment>
<comment type="subcellular location">
    <subcellularLocation>
        <location evidence="1">Cytoplasm</location>
    </subcellularLocation>
</comment>
<comment type="similarity">
    <text evidence="1">Belongs to the polyribonucleotide nucleotidyltransferase family.</text>
</comment>
<accession>A9B8G1</accession>
<feature type="chain" id="PRO_0000381905" description="Polyribonucleotide nucleotidyltransferase">
    <location>
        <begin position="1"/>
        <end position="777"/>
    </location>
</feature>
<feature type="domain" description="KH" evidence="1">
    <location>
        <begin position="561"/>
        <end position="620"/>
    </location>
</feature>
<feature type="domain" description="S1 motif" evidence="1">
    <location>
        <begin position="630"/>
        <end position="699"/>
    </location>
</feature>
<feature type="region of interest" description="Disordered" evidence="2">
    <location>
        <begin position="703"/>
        <end position="777"/>
    </location>
</feature>
<feature type="compositionally biased region" description="Gly residues" evidence="2">
    <location>
        <begin position="718"/>
        <end position="727"/>
    </location>
</feature>
<feature type="compositionally biased region" description="Basic and acidic residues" evidence="2">
    <location>
        <begin position="728"/>
        <end position="761"/>
    </location>
</feature>
<feature type="compositionally biased region" description="Basic and acidic residues" evidence="2">
    <location>
        <begin position="768"/>
        <end position="777"/>
    </location>
</feature>
<feature type="binding site" evidence="1">
    <location>
        <position position="494"/>
    </location>
    <ligand>
        <name>Mg(2+)</name>
        <dbReference type="ChEBI" id="CHEBI:18420"/>
    </ligand>
</feature>
<feature type="binding site" evidence="1">
    <location>
        <position position="500"/>
    </location>
    <ligand>
        <name>Mg(2+)</name>
        <dbReference type="ChEBI" id="CHEBI:18420"/>
    </ligand>
</feature>
<keyword id="KW-0963">Cytoplasm</keyword>
<keyword id="KW-0460">Magnesium</keyword>
<keyword id="KW-0479">Metal-binding</keyword>
<keyword id="KW-0548">Nucleotidyltransferase</keyword>
<keyword id="KW-0694">RNA-binding</keyword>
<keyword id="KW-0808">Transferase</keyword>
<dbReference type="EC" id="2.7.7.8" evidence="1"/>
<dbReference type="EMBL" id="CP000875">
    <property type="protein sequence ID" value="ABX06514.1"/>
    <property type="molecule type" value="Genomic_DNA"/>
</dbReference>
<dbReference type="SMR" id="A9B8G1"/>
<dbReference type="FunCoup" id="A9B8G1">
    <property type="interactions" value="518"/>
</dbReference>
<dbReference type="STRING" id="316274.Haur_3880"/>
<dbReference type="KEGG" id="hau:Haur_3880"/>
<dbReference type="eggNOG" id="COG1185">
    <property type="taxonomic scope" value="Bacteria"/>
</dbReference>
<dbReference type="HOGENOM" id="CLU_004217_2_2_0"/>
<dbReference type="InParanoid" id="A9B8G1"/>
<dbReference type="Proteomes" id="UP000000787">
    <property type="component" value="Chromosome"/>
</dbReference>
<dbReference type="GO" id="GO:0005829">
    <property type="term" value="C:cytosol"/>
    <property type="evidence" value="ECO:0007669"/>
    <property type="project" value="TreeGrafter"/>
</dbReference>
<dbReference type="GO" id="GO:0000175">
    <property type="term" value="F:3'-5'-RNA exonuclease activity"/>
    <property type="evidence" value="ECO:0007669"/>
    <property type="project" value="TreeGrafter"/>
</dbReference>
<dbReference type="GO" id="GO:0000287">
    <property type="term" value="F:magnesium ion binding"/>
    <property type="evidence" value="ECO:0007669"/>
    <property type="project" value="UniProtKB-UniRule"/>
</dbReference>
<dbReference type="GO" id="GO:0004654">
    <property type="term" value="F:polyribonucleotide nucleotidyltransferase activity"/>
    <property type="evidence" value="ECO:0007669"/>
    <property type="project" value="UniProtKB-UniRule"/>
</dbReference>
<dbReference type="GO" id="GO:0003723">
    <property type="term" value="F:RNA binding"/>
    <property type="evidence" value="ECO:0007669"/>
    <property type="project" value="UniProtKB-UniRule"/>
</dbReference>
<dbReference type="GO" id="GO:0006402">
    <property type="term" value="P:mRNA catabolic process"/>
    <property type="evidence" value="ECO:0007669"/>
    <property type="project" value="UniProtKB-UniRule"/>
</dbReference>
<dbReference type="GO" id="GO:0006396">
    <property type="term" value="P:RNA processing"/>
    <property type="evidence" value="ECO:0007669"/>
    <property type="project" value="InterPro"/>
</dbReference>
<dbReference type="CDD" id="cd02393">
    <property type="entry name" value="KH-I_PNPase"/>
    <property type="match status" value="1"/>
</dbReference>
<dbReference type="CDD" id="cd11363">
    <property type="entry name" value="RNase_PH_PNPase_1"/>
    <property type="match status" value="1"/>
</dbReference>
<dbReference type="CDD" id="cd11364">
    <property type="entry name" value="RNase_PH_PNPase_2"/>
    <property type="match status" value="1"/>
</dbReference>
<dbReference type="CDD" id="cd04472">
    <property type="entry name" value="S1_PNPase"/>
    <property type="match status" value="1"/>
</dbReference>
<dbReference type="FunFam" id="3.30.1370.10:FF:000001">
    <property type="entry name" value="Polyribonucleotide nucleotidyltransferase"/>
    <property type="match status" value="1"/>
</dbReference>
<dbReference type="FunFam" id="3.30.230.70:FF:000001">
    <property type="entry name" value="Polyribonucleotide nucleotidyltransferase"/>
    <property type="match status" value="1"/>
</dbReference>
<dbReference type="FunFam" id="3.30.230.70:FF:000002">
    <property type="entry name" value="Polyribonucleotide nucleotidyltransferase"/>
    <property type="match status" value="1"/>
</dbReference>
<dbReference type="FunFam" id="2.40.50.140:FF:000189">
    <property type="entry name" value="Polyribonucleotide nucleotidyltransferase, putative"/>
    <property type="match status" value="1"/>
</dbReference>
<dbReference type="Gene3D" id="3.30.230.70">
    <property type="entry name" value="GHMP Kinase, N-terminal domain"/>
    <property type="match status" value="2"/>
</dbReference>
<dbReference type="Gene3D" id="3.30.1370.10">
    <property type="entry name" value="K Homology domain, type 1"/>
    <property type="match status" value="1"/>
</dbReference>
<dbReference type="Gene3D" id="2.40.50.140">
    <property type="entry name" value="Nucleic acid-binding proteins"/>
    <property type="match status" value="1"/>
</dbReference>
<dbReference type="HAMAP" id="MF_01595">
    <property type="entry name" value="PNPase"/>
    <property type="match status" value="1"/>
</dbReference>
<dbReference type="InterPro" id="IPR001247">
    <property type="entry name" value="ExoRNase_PH_dom1"/>
</dbReference>
<dbReference type="InterPro" id="IPR015847">
    <property type="entry name" value="ExoRNase_PH_dom2"/>
</dbReference>
<dbReference type="InterPro" id="IPR036345">
    <property type="entry name" value="ExoRNase_PH_dom2_sf"/>
</dbReference>
<dbReference type="InterPro" id="IPR004087">
    <property type="entry name" value="KH_dom"/>
</dbReference>
<dbReference type="InterPro" id="IPR004088">
    <property type="entry name" value="KH_dom_type_1"/>
</dbReference>
<dbReference type="InterPro" id="IPR036612">
    <property type="entry name" value="KH_dom_type_1_sf"/>
</dbReference>
<dbReference type="InterPro" id="IPR012340">
    <property type="entry name" value="NA-bd_OB-fold"/>
</dbReference>
<dbReference type="InterPro" id="IPR012162">
    <property type="entry name" value="PNPase"/>
</dbReference>
<dbReference type="InterPro" id="IPR027408">
    <property type="entry name" value="PNPase/RNase_PH_dom_sf"/>
</dbReference>
<dbReference type="InterPro" id="IPR015848">
    <property type="entry name" value="PNPase_PH_RNA-bd_bac/org-type"/>
</dbReference>
<dbReference type="InterPro" id="IPR036456">
    <property type="entry name" value="PNPase_PH_RNA-bd_sf"/>
</dbReference>
<dbReference type="InterPro" id="IPR020568">
    <property type="entry name" value="Ribosomal_Su5_D2-typ_SF"/>
</dbReference>
<dbReference type="InterPro" id="IPR003029">
    <property type="entry name" value="S1_domain"/>
</dbReference>
<dbReference type="NCBIfam" id="TIGR03591">
    <property type="entry name" value="polynuc_phos"/>
    <property type="match status" value="1"/>
</dbReference>
<dbReference type="NCBIfam" id="NF008805">
    <property type="entry name" value="PRK11824.1"/>
    <property type="match status" value="1"/>
</dbReference>
<dbReference type="PANTHER" id="PTHR11252">
    <property type="entry name" value="POLYRIBONUCLEOTIDE NUCLEOTIDYLTRANSFERASE"/>
    <property type="match status" value="1"/>
</dbReference>
<dbReference type="PANTHER" id="PTHR11252:SF0">
    <property type="entry name" value="POLYRIBONUCLEOTIDE NUCLEOTIDYLTRANSFERASE 1, MITOCHONDRIAL"/>
    <property type="match status" value="1"/>
</dbReference>
<dbReference type="Pfam" id="PF00013">
    <property type="entry name" value="KH_1"/>
    <property type="match status" value="1"/>
</dbReference>
<dbReference type="Pfam" id="PF03726">
    <property type="entry name" value="PNPase"/>
    <property type="match status" value="1"/>
</dbReference>
<dbReference type="Pfam" id="PF01138">
    <property type="entry name" value="RNase_PH"/>
    <property type="match status" value="2"/>
</dbReference>
<dbReference type="Pfam" id="PF03725">
    <property type="entry name" value="RNase_PH_C"/>
    <property type="match status" value="2"/>
</dbReference>
<dbReference type="Pfam" id="PF00575">
    <property type="entry name" value="S1"/>
    <property type="match status" value="1"/>
</dbReference>
<dbReference type="PIRSF" id="PIRSF005499">
    <property type="entry name" value="PNPase"/>
    <property type="match status" value="1"/>
</dbReference>
<dbReference type="SMART" id="SM00322">
    <property type="entry name" value="KH"/>
    <property type="match status" value="1"/>
</dbReference>
<dbReference type="SMART" id="SM00316">
    <property type="entry name" value="S1"/>
    <property type="match status" value="1"/>
</dbReference>
<dbReference type="SUPFAM" id="SSF54791">
    <property type="entry name" value="Eukaryotic type KH-domain (KH-domain type I)"/>
    <property type="match status" value="1"/>
</dbReference>
<dbReference type="SUPFAM" id="SSF50249">
    <property type="entry name" value="Nucleic acid-binding proteins"/>
    <property type="match status" value="1"/>
</dbReference>
<dbReference type="SUPFAM" id="SSF46915">
    <property type="entry name" value="Polynucleotide phosphorylase/guanosine pentaphosphate synthase (PNPase/GPSI), domain 3"/>
    <property type="match status" value="1"/>
</dbReference>
<dbReference type="SUPFAM" id="SSF55666">
    <property type="entry name" value="Ribonuclease PH domain 2-like"/>
    <property type="match status" value="2"/>
</dbReference>
<dbReference type="SUPFAM" id="SSF54211">
    <property type="entry name" value="Ribosomal protein S5 domain 2-like"/>
    <property type="match status" value="2"/>
</dbReference>
<dbReference type="PROSITE" id="PS50084">
    <property type="entry name" value="KH_TYPE_1"/>
    <property type="match status" value="1"/>
</dbReference>
<dbReference type="PROSITE" id="PS50126">
    <property type="entry name" value="S1"/>
    <property type="match status" value="1"/>
</dbReference>
<sequence>MSEQQVHSVTVELAGRPLTIEAGRVAQLANGAVLVRYGDTVLLAAVTASAEPRDGIDFFPLTVDYEEKMYAAGKIPGSFFKREGRPTETAILTSRLTDRPLRPLFPKGYYNDVQVSITTLSTDQVNDPGPLAIIGASAALVISDIPFAAPVGAVQMGHIDGVFAVNPVMGLMENSRLDLVVAGTSEAVMMVEASAYELTEAEMLEAVKRGHEAMQAVIQAQLELAEKCGKPKKEFVAPVVDTSLQDEIKAWMGNRFLQALNNSDKAAREAATDSLRTDVLEQFSAGVAEEELAARVKAVTKNYDALVKDEVRASILEQGIRVDGRKVNEIRPIAVDVGVLPRVHGSGLFTRGQTQVLTVATLGSPGDEQRLDDLGIETTRHYMHHYNFPAFSTGEARPSRGPRRRDIGHGKLAERALVPVLPEKDKFPYTMRLVSEVLASNGSSSMASVCGSSLALMDAGVPIKAPVAGVAMGLITGKEAGQFSVLTDIQGLEDALGDMDFKVAGTTAGITALQMDIKTTGITYEIMQQAFEQARQGRVFILDKMNEIINTARNDISQFAPRIITLQIDPSKIGALIGPGGKTIRSIIEQTGAQIDVEDDGRVFVTTPDADGARMAQSLIEGLTREAKVGEIFTGKVVRIMPYGAFVNVLPGKDGMVHVSELDEKRVENVEDVVKIGDELTVMVIDVEPGTGKLSLSRRAILTGETAEQRKSSSSKGGPRGGGGGGDRGPRPGGDRGPRPEGDRGPRPEGDRPREGGDRGPRPGNGGNDRRGGGFRG</sequence>
<gene>
    <name evidence="1" type="primary">pnp</name>
    <name type="ordered locus">Haur_3880</name>
</gene>